<keyword id="KW-0378">Hydrolase</keyword>
<keyword id="KW-0460">Magnesium</keyword>
<keyword id="KW-0511">Multifunctional enzyme</keyword>
<keyword id="KW-0548">Nucleotidyltransferase</keyword>
<keyword id="KW-0677">Repeat</keyword>
<keyword id="KW-0808">Transferase</keyword>
<evidence type="ECO:0000255" key="1">
    <source>
        <dbReference type="HAMAP-Rule" id="MF_00277"/>
    </source>
</evidence>
<evidence type="ECO:0000255" key="2">
    <source>
        <dbReference type="PROSITE-ProRule" id="PRU01175"/>
    </source>
</evidence>
<comment type="function">
    <text evidence="1">Modifies, by uridylylation and deuridylylation, the PII regulatory proteins (GlnB and homologs), in response to the nitrogen status of the cell that GlnD senses through the glutamine level. Under low glutamine levels, catalyzes the conversion of the PII proteins and UTP to PII-UMP and PPi, while under higher glutamine levels, GlnD hydrolyzes PII-UMP to PII and UMP (deuridylylation). Thus, controls uridylylation state and activity of the PII proteins, and plays an important role in the regulation of nitrogen assimilation and metabolism.</text>
</comment>
<comment type="catalytic activity">
    <reaction evidence="1">
        <text>[protein-PII]-L-tyrosine + UTP = [protein-PII]-uridylyl-L-tyrosine + diphosphate</text>
        <dbReference type="Rhea" id="RHEA:13673"/>
        <dbReference type="Rhea" id="RHEA-COMP:12147"/>
        <dbReference type="Rhea" id="RHEA-COMP:12148"/>
        <dbReference type="ChEBI" id="CHEBI:33019"/>
        <dbReference type="ChEBI" id="CHEBI:46398"/>
        <dbReference type="ChEBI" id="CHEBI:46858"/>
        <dbReference type="ChEBI" id="CHEBI:90602"/>
        <dbReference type="EC" id="2.7.7.59"/>
    </reaction>
</comment>
<comment type="catalytic activity">
    <reaction evidence="1">
        <text>[protein-PII]-uridylyl-L-tyrosine + H2O = [protein-PII]-L-tyrosine + UMP + H(+)</text>
        <dbReference type="Rhea" id="RHEA:48600"/>
        <dbReference type="Rhea" id="RHEA-COMP:12147"/>
        <dbReference type="Rhea" id="RHEA-COMP:12148"/>
        <dbReference type="ChEBI" id="CHEBI:15377"/>
        <dbReference type="ChEBI" id="CHEBI:15378"/>
        <dbReference type="ChEBI" id="CHEBI:46858"/>
        <dbReference type="ChEBI" id="CHEBI:57865"/>
        <dbReference type="ChEBI" id="CHEBI:90602"/>
    </reaction>
</comment>
<comment type="cofactor">
    <cofactor evidence="1">
        <name>Mg(2+)</name>
        <dbReference type="ChEBI" id="CHEBI:18420"/>
    </cofactor>
</comment>
<comment type="activity regulation">
    <text evidence="1">Uridylyltransferase (UTase) activity is inhibited by glutamine, while glutamine activates uridylyl-removing (UR) activity.</text>
</comment>
<comment type="domain">
    <text evidence="1">Has four distinct domains: an N-terminal nucleotidyltransferase (NT) domain responsible for UTase activity, a central HD domain that encodes UR activity, and two C-terminal ACT domains that seem to have a role in glutamine sensing.</text>
</comment>
<comment type="similarity">
    <text evidence="1">Belongs to the GlnD family.</text>
</comment>
<reference key="1">
    <citation type="journal article" date="2009" name="Genome Biol.">
        <title>Genomic and genetic analyses of diversity and plant interactions of Pseudomonas fluorescens.</title>
        <authorList>
            <person name="Silby M.W."/>
            <person name="Cerdeno-Tarraga A.M."/>
            <person name="Vernikos G.S."/>
            <person name="Giddens S.R."/>
            <person name="Jackson R.W."/>
            <person name="Preston G.M."/>
            <person name="Zhang X.-X."/>
            <person name="Moon C.D."/>
            <person name="Gehrig S.M."/>
            <person name="Godfrey S.A.C."/>
            <person name="Knight C.G."/>
            <person name="Malone J.G."/>
            <person name="Robinson Z."/>
            <person name="Spiers A.J."/>
            <person name="Harris S."/>
            <person name="Challis G.L."/>
            <person name="Yaxley A.M."/>
            <person name="Harris D."/>
            <person name="Seeger K."/>
            <person name="Murphy L."/>
            <person name="Rutter S."/>
            <person name="Squares R."/>
            <person name="Quail M.A."/>
            <person name="Saunders E."/>
            <person name="Mavromatis K."/>
            <person name="Brettin T.S."/>
            <person name="Bentley S.D."/>
            <person name="Hothersall J."/>
            <person name="Stephens E."/>
            <person name="Thomas C.M."/>
            <person name="Parkhill J."/>
            <person name="Levy S.B."/>
            <person name="Rainey P.B."/>
            <person name="Thomson N.R."/>
        </authorList>
    </citation>
    <scope>NUCLEOTIDE SEQUENCE [LARGE SCALE GENOMIC DNA]</scope>
    <source>
        <strain>SBW25</strain>
    </source>
</reference>
<feature type="chain" id="PRO_1000204800" description="Bifunctional uridylyltransferase/uridylyl-removing enzyme">
    <location>
        <begin position="1"/>
        <end position="900"/>
    </location>
</feature>
<feature type="domain" description="HD" evidence="2">
    <location>
        <begin position="461"/>
        <end position="583"/>
    </location>
</feature>
<feature type="domain" description="ACT 1" evidence="1">
    <location>
        <begin position="706"/>
        <end position="784"/>
    </location>
</feature>
<feature type="domain" description="ACT 2" evidence="1">
    <location>
        <begin position="816"/>
        <end position="892"/>
    </location>
</feature>
<feature type="region of interest" description="Uridylyltransferase">
    <location>
        <begin position="1"/>
        <end position="342"/>
    </location>
</feature>
<feature type="region of interest" description="Uridylyl-removing">
    <location>
        <begin position="343"/>
        <end position="705"/>
    </location>
</feature>
<accession>C3K5E4</accession>
<dbReference type="EC" id="2.7.7.59" evidence="1"/>
<dbReference type="EC" id="3.1.4.-" evidence="1"/>
<dbReference type="EMBL" id="AM181176">
    <property type="protein sequence ID" value="CAY47525.1"/>
    <property type="molecule type" value="Genomic_DNA"/>
</dbReference>
<dbReference type="RefSeq" id="WP_012722593.1">
    <property type="nucleotide sequence ID" value="NC_012660.1"/>
</dbReference>
<dbReference type="SMR" id="C3K5E4"/>
<dbReference type="STRING" id="294.SRM1_01127"/>
<dbReference type="eggNOG" id="COG2844">
    <property type="taxonomic scope" value="Bacteria"/>
</dbReference>
<dbReference type="HOGENOM" id="CLU_012833_0_0_6"/>
<dbReference type="OrthoDB" id="9758038at2"/>
<dbReference type="GO" id="GO:0008773">
    <property type="term" value="F:[protein-PII] uridylyltransferase activity"/>
    <property type="evidence" value="ECO:0007669"/>
    <property type="project" value="UniProtKB-UniRule"/>
</dbReference>
<dbReference type="GO" id="GO:0008081">
    <property type="term" value="F:phosphoric diester hydrolase activity"/>
    <property type="evidence" value="ECO:0007669"/>
    <property type="project" value="UniProtKB-UniRule"/>
</dbReference>
<dbReference type="GO" id="GO:0006808">
    <property type="term" value="P:regulation of nitrogen utilization"/>
    <property type="evidence" value="ECO:0007669"/>
    <property type="project" value="UniProtKB-UniRule"/>
</dbReference>
<dbReference type="CDD" id="cd04899">
    <property type="entry name" value="ACT_ACR-UUR-like_2"/>
    <property type="match status" value="1"/>
</dbReference>
<dbReference type="CDD" id="cd04900">
    <property type="entry name" value="ACT_UUR-like_1"/>
    <property type="match status" value="1"/>
</dbReference>
<dbReference type="CDD" id="cd00077">
    <property type="entry name" value="HDc"/>
    <property type="match status" value="1"/>
</dbReference>
<dbReference type="CDD" id="cd05401">
    <property type="entry name" value="NT_GlnE_GlnD_like"/>
    <property type="match status" value="1"/>
</dbReference>
<dbReference type="FunFam" id="1.10.3090.10:FF:000005">
    <property type="entry name" value="Bifunctional uridylyltransferase/uridylyl-removing enzyme"/>
    <property type="match status" value="1"/>
</dbReference>
<dbReference type="Gene3D" id="3.30.460.10">
    <property type="entry name" value="Beta Polymerase, domain 2"/>
    <property type="match status" value="1"/>
</dbReference>
<dbReference type="Gene3D" id="1.10.3090.10">
    <property type="entry name" value="cca-adding enzyme, domain 2"/>
    <property type="match status" value="1"/>
</dbReference>
<dbReference type="Gene3D" id="1.20.120.330">
    <property type="entry name" value="Nucleotidyltransferases domain 2"/>
    <property type="match status" value="1"/>
</dbReference>
<dbReference type="HAMAP" id="MF_00277">
    <property type="entry name" value="PII_uridylyl_transf"/>
    <property type="match status" value="1"/>
</dbReference>
<dbReference type="InterPro" id="IPR045865">
    <property type="entry name" value="ACT-like_dom_sf"/>
</dbReference>
<dbReference type="InterPro" id="IPR002912">
    <property type="entry name" value="ACT_dom"/>
</dbReference>
<dbReference type="InterPro" id="IPR003607">
    <property type="entry name" value="HD/PDEase_dom"/>
</dbReference>
<dbReference type="InterPro" id="IPR006674">
    <property type="entry name" value="HD_domain"/>
</dbReference>
<dbReference type="InterPro" id="IPR043519">
    <property type="entry name" value="NT_sf"/>
</dbReference>
<dbReference type="InterPro" id="IPR013546">
    <property type="entry name" value="PII_UdlTrfase/GS_AdlTrfase"/>
</dbReference>
<dbReference type="InterPro" id="IPR002934">
    <property type="entry name" value="Polymerase_NTP_transf_dom"/>
</dbReference>
<dbReference type="InterPro" id="IPR010043">
    <property type="entry name" value="UTase/UR"/>
</dbReference>
<dbReference type="NCBIfam" id="NF001366">
    <property type="entry name" value="PRK00275.1"/>
    <property type="match status" value="1"/>
</dbReference>
<dbReference type="NCBIfam" id="TIGR01693">
    <property type="entry name" value="UTase_glnD"/>
    <property type="match status" value="1"/>
</dbReference>
<dbReference type="PANTHER" id="PTHR47320">
    <property type="entry name" value="BIFUNCTIONAL URIDYLYLTRANSFERASE/URIDYLYL-REMOVING ENZYME"/>
    <property type="match status" value="1"/>
</dbReference>
<dbReference type="PANTHER" id="PTHR47320:SF1">
    <property type="entry name" value="BIFUNCTIONAL URIDYLYLTRANSFERASE_URIDYLYL-REMOVING ENZYME"/>
    <property type="match status" value="1"/>
</dbReference>
<dbReference type="Pfam" id="PF01842">
    <property type="entry name" value="ACT"/>
    <property type="match status" value="1"/>
</dbReference>
<dbReference type="Pfam" id="PF08335">
    <property type="entry name" value="GlnD_UR_UTase"/>
    <property type="match status" value="1"/>
</dbReference>
<dbReference type="Pfam" id="PF01966">
    <property type="entry name" value="HD"/>
    <property type="match status" value="1"/>
</dbReference>
<dbReference type="Pfam" id="PF01909">
    <property type="entry name" value="NTP_transf_2"/>
    <property type="match status" value="1"/>
</dbReference>
<dbReference type="PIRSF" id="PIRSF006288">
    <property type="entry name" value="PII_uridyltransf"/>
    <property type="match status" value="1"/>
</dbReference>
<dbReference type="SMART" id="SM00471">
    <property type="entry name" value="HDc"/>
    <property type="match status" value="1"/>
</dbReference>
<dbReference type="SUPFAM" id="SSF55021">
    <property type="entry name" value="ACT-like"/>
    <property type="match status" value="1"/>
</dbReference>
<dbReference type="SUPFAM" id="SSF109604">
    <property type="entry name" value="HD-domain/PDEase-like"/>
    <property type="match status" value="1"/>
</dbReference>
<dbReference type="SUPFAM" id="SSF81301">
    <property type="entry name" value="Nucleotidyltransferase"/>
    <property type="match status" value="1"/>
</dbReference>
<dbReference type="SUPFAM" id="SSF81593">
    <property type="entry name" value="Nucleotidyltransferase substrate binding subunit/domain"/>
    <property type="match status" value="1"/>
</dbReference>
<dbReference type="PROSITE" id="PS51671">
    <property type="entry name" value="ACT"/>
    <property type="match status" value="2"/>
</dbReference>
<dbReference type="PROSITE" id="PS51831">
    <property type="entry name" value="HD"/>
    <property type="match status" value="1"/>
</dbReference>
<organism>
    <name type="scientific">Pseudomonas fluorescens (strain SBW25)</name>
    <dbReference type="NCBI Taxonomy" id="216595"/>
    <lineage>
        <taxon>Bacteria</taxon>
        <taxon>Pseudomonadati</taxon>
        <taxon>Pseudomonadota</taxon>
        <taxon>Gammaproteobacteria</taxon>
        <taxon>Pseudomonadales</taxon>
        <taxon>Pseudomonadaceae</taxon>
        <taxon>Pseudomonas</taxon>
    </lineage>
</organism>
<gene>
    <name evidence="1" type="primary">glnD</name>
    <name type="ordered locus">PFLU_1268</name>
</gene>
<name>GLND_PSEFS</name>
<sequence>MPQVDPELFDRGQFQAELALKASPIAAFKKAIRQAREVLDGRFRSGRDIRRLIEDRAWFVDNILQKAWEQFSWSEDADIALVAVGGYGRGELHPYSDIDLLILLDSADHEIFRDSIERFLTLLWDIGLEVGQSVRSVDECAEEARADLTVITNLMESRTIAGPERLRQRMLEVTSTAHMWPSKDFFLAKRAEQKARHHKYNDTEYNLEPNVKGSPGGLRDIQTILWVARRQYGTLNLRALAGEGFLVESENALLASSQEFLWKVRYALHMLAGRSEDRLLFDHQRSIATLLGFEGEDAKTSIESFMQQYYRVVMSIAQLSDLIIQHFEEVILAPEDEAPPQPINSRFQLHDGYIEARNDNVFRRTPFAMLEIFVLMAQQPEIKGVRADTIRLLRENRHLIDDDFRNDIRNTSLFIELFKCKIGIHRNLRRMNRYGILGRYLPEFGFIVGQMQHDLFHIYTVDAHTLNLIKHLRKLQYTQVSEKFPLASKLMAKLPKPELIYLAGLYHDIGKGRHGDHSEIGAVDAEAFCQRHQLPLWDSRLIVWLVQNHLVMSTTAQRKDLSDPQVIHDFAGIVEDETRLDYLYVLTVSDINATNPTLWNSWRASLLRQLYTETKRALRRGLENPVDREEQIRRTQSAALDILVRGGNDPDDVEQLWSQLGDDYFLRHTAGDVAWHSDAILQQPADGGPLVLIKETTQREFEGGTQIFIYAPDQHDFFAVTVAAMDQLNLNIHDARVITSSSQFTLDTYIVLDTEGESIGDNPVRVKKIREGLTEALRNPDDYPTIIQRRVPRQLKHFAFAPQVTISNDAQRPVTVLELSAPDRPGLLARIGGIFLEFDLSLQNAKIATLGERVEDVFFITDADNQPLSDPELCRRLQDAIVQQLSVTQEPGVELTRLTI</sequence>
<proteinExistence type="inferred from homology"/>
<protein>
    <recommendedName>
        <fullName evidence="1">Bifunctional uridylyltransferase/uridylyl-removing enzyme</fullName>
        <shortName evidence="1">UTase/UR</shortName>
    </recommendedName>
    <alternativeName>
        <fullName evidence="1">Bifunctional [protein-PII] modification enzyme</fullName>
    </alternativeName>
    <alternativeName>
        <fullName evidence="1">Bifunctional nitrogen sensor protein</fullName>
    </alternativeName>
    <domain>
        <recommendedName>
            <fullName evidence="1">[Protein-PII] uridylyltransferase</fullName>
            <shortName evidence="1">PII uridylyltransferase</shortName>
            <shortName evidence="1">UTase</shortName>
            <ecNumber evidence="1">2.7.7.59</ecNumber>
        </recommendedName>
    </domain>
    <domain>
        <recommendedName>
            <fullName evidence="1">[Protein-PII]-UMP uridylyl-removing enzyme</fullName>
            <shortName evidence="1">UR</shortName>
            <ecNumber evidence="1">3.1.4.-</ecNumber>
        </recommendedName>
    </domain>
</protein>